<dbReference type="EC" id="6.1.1.21" evidence="3"/>
<dbReference type="EMBL" id="AF020715">
    <property type="protein sequence ID" value="AAC61600.1"/>
    <property type="molecule type" value="mRNA"/>
</dbReference>
<dbReference type="EMBL" id="AL355775">
    <property type="protein sequence ID" value="CAB90937.1"/>
    <property type="molecule type" value="Genomic_DNA"/>
</dbReference>
<dbReference type="EMBL" id="CP002686">
    <property type="protein sequence ID" value="AEE78113.1"/>
    <property type="molecule type" value="Genomic_DNA"/>
</dbReference>
<dbReference type="EMBL" id="AY056233">
    <property type="protein sequence ID" value="AAL07082.1"/>
    <property type="molecule type" value="mRNA"/>
</dbReference>
<dbReference type="EMBL" id="AY117252">
    <property type="protein sequence ID" value="AAM51327.1"/>
    <property type="molecule type" value="mRNA"/>
</dbReference>
<dbReference type="PIR" id="T49251">
    <property type="entry name" value="T49251"/>
</dbReference>
<dbReference type="SMR" id="O82413"/>
<dbReference type="FunCoup" id="O82413">
    <property type="interactions" value="3954"/>
</dbReference>
<dbReference type="STRING" id="3702.O82413"/>
<dbReference type="iPTMnet" id="O82413"/>
<dbReference type="PaxDb" id="3702-AT3G46100.1"/>
<dbReference type="ProteomicsDB" id="233041"/>
<dbReference type="EnsemblPlants" id="AT3G46100.1">
    <property type="protein sequence ID" value="AT3G46100.1"/>
    <property type="gene ID" value="AT3G46100"/>
</dbReference>
<dbReference type="Gramene" id="AT3G46100.1">
    <property type="protein sequence ID" value="AT3G46100.1"/>
    <property type="gene ID" value="AT3G46100"/>
</dbReference>
<dbReference type="KEGG" id="ath:AT3G46100"/>
<dbReference type="Araport" id="AT3G46100"/>
<dbReference type="TAIR" id="AT3G46100">
    <property type="gene designation" value="HRS1"/>
</dbReference>
<dbReference type="eggNOG" id="KOG1936">
    <property type="taxonomic scope" value="Eukaryota"/>
</dbReference>
<dbReference type="HOGENOM" id="CLU_025113_3_1_1"/>
<dbReference type="InParanoid" id="O82413"/>
<dbReference type="OMA" id="CGGGNFK"/>
<dbReference type="PhylomeDB" id="O82413"/>
<dbReference type="BRENDA" id="6.1.1.21">
    <property type="organism ID" value="399"/>
</dbReference>
<dbReference type="PRO" id="PR:O82413"/>
<dbReference type="Proteomes" id="UP000006548">
    <property type="component" value="Chromosome 3"/>
</dbReference>
<dbReference type="ExpressionAtlas" id="O82413">
    <property type="expression patterns" value="baseline and differential"/>
</dbReference>
<dbReference type="GO" id="GO:0009507">
    <property type="term" value="C:chloroplast"/>
    <property type="evidence" value="ECO:0000314"/>
    <property type="project" value="TAIR"/>
</dbReference>
<dbReference type="GO" id="GO:0005739">
    <property type="term" value="C:mitochondrion"/>
    <property type="evidence" value="ECO:0000314"/>
    <property type="project" value="TAIR"/>
</dbReference>
<dbReference type="GO" id="GO:0005524">
    <property type="term" value="F:ATP binding"/>
    <property type="evidence" value="ECO:0007669"/>
    <property type="project" value="UniProtKB-KW"/>
</dbReference>
<dbReference type="GO" id="GO:0004821">
    <property type="term" value="F:histidine-tRNA ligase activity"/>
    <property type="evidence" value="ECO:0000250"/>
    <property type="project" value="TAIR"/>
</dbReference>
<dbReference type="GO" id="GO:0006427">
    <property type="term" value="P:histidyl-tRNA aminoacylation"/>
    <property type="evidence" value="ECO:0000250"/>
    <property type="project" value="TAIR"/>
</dbReference>
<dbReference type="CDD" id="cd00773">
    <property type="entry name" value="HisRS-like_core"/>
    <property type="match status" value="1"/>
</dbReference>
<dbReference type="FunFam" id="3.30.930.10:FF:000054">
    <property type="entry name" value="Histidine--tRNA ligase chloroplastic/mitochondrial"/>
    <property type="match status" value="1"/>
</dbReference>
<dbReference type="FunFam" id="3.40.50.800:FF:000017">
    <property type="entry name" value="Histidine--tRNA ligase chloroplastic/mitochondrial"/>
    <property type="match status" value="1"/>
</dbReference>
<dbReference type="Gene3D" id="3.40.50.800">
    <property type="entry name" value="Anticodon-binding domain"/>
    <property type="match status" value="1"/>
</dbReference>
<dbReference type="Gene3D" id="3.30.930.10">
    <property type="entry name" value="Bira Bifunctional Protein, Domain 2"/>
    <property type="match status" value="1"/>
</dbReference>
<dbReference type="HAMAP" id="MF_00127">
    <property type="entry name" value="His_tRNA_synth"/>
    <property type="match status" value="1"/>
</dbReference>
<dbReference type="InterPro" id="IPR006195">
    <property type="entry name" value="aa-tRNA-synth_II"/>
</dbReference>
<dbReference type="InterPro" id="IPR045864">
    <property type="entry name" value="aa-tRNA-synth_II/BPL/LPL"/>
</dbReference>
<dbReference type="InterPro" id="IPR004154">
    <property type="entry name" value="Anticodon-bd"/>
</dbReference>
<dbReference type="InterPro" id="IPR036621">
    <property type="entry name" value="Anticodon-bd_dom_sf"/>
</dbReference>
<dbReference type="InterPro" id="IPR015807">
    <property type="entry name" value="His-tRNA-ligase"/>
</dbReference>
<dbReference type="InterPro" id="IPR041715">
    <property type="entry name" value="HisRS-like_core"/>
</dbReference>
<dbReference type="InterPro" id="IPR004516">
    <property type="entry name" value="HisRS/HisZ"/>
</dbReference>
<dbReference type="NCBIfam" id="TIGR00442">
    <property type="entry name" value="hisS"/>
    <property type="match status" value="1"/>
</dbReference>
<dbReference type="PANTHER" id="PTHR43707:SF1">
    <property type="entry name" value="HISTIDINE--TRNA LIGASE, MITOCHONDRIAL-RELATED"/>
    <property type="match status" value="1"/>
</dbReference>
<dbReference type="PANTHER" id="PTHR43707">
    <property type="entry name" value="HISTIDYL-TRNA SYNTHETASE"/>
    <property type="match status" value="1"/>
</dbReference>
<dbReference type="Pfam" id="PF03129">
    <property type="entry name" value="HGTP_anticodon"/>
    <property type="match status" value="1"/>
</dbReference>
<dbReference type="Pfam" id="PF13393">
    <property type="entry name" value="tRNA-synt_His"/>
    <property type="match status" value="1"/>
</dbReference>
<dbReference type="PIRSF" id="PIRSF001549">
    <property type="entry name" value="His-tRNA_synth"/>
    <property type="match status" value="1"/>
</dbReference>
<dbReference type="SUPFAM" id="SSF52954">
    <property type="entry name" value="Class II aaRS ABD-related"/>
    <property type="match status" value="1"/>
</dbReference>
<dbReference type="SUPFAM" id="SSF55681">
    <property type="entry name" value="Class II aaRS and biotin synthetases"/>
    <property type="match status" value="1"/>
</dbReference>
<dbReference type="PROSITE" id="PS50862">
    <property type="entry name" value="AA_TRNA_LIGASE_II"/>
    <property type="match status" value="1"/>
</dbReference>
<reference key="1">
    <citation type="journal article" date="1998" name="FEBS Lett.">
        <title>Potential dual targeting of an Arabidopsis archaebacterial-like histidyl-tRNA synthetase to mitochondria and chloroplasts.</title>
        <authorList>
            <person name="Akashi K."/>
            <person name="Grandjean O."/>
            <person name="Small I."/>
        </authorList>
    </citation>
    <scope>NUCLEOTIDE SEQUENCE [MRNA]</scope>
    <scope>SUBCELLULAR LOCATION</scope>
</reference>
<reference key="2">
    <citation type="journal article" date="2000" name="Nature">
        <title>Sequence and analysis of chromosome 3 of the plant Arabidopsis thaliana.</title>
        <authorList>
            <person name="Salanoubat M."/>
            <person name="Lemcke K."/>
            <person name="Rieger M."/>
            <person name="Ansorge W."/>
            <person name="Unseld M."/>
            <person name="Fartmann B."/>
            <person name="Valle G."/>
            <person name="Bloecker H."/>
            <person name="Perez-Alonso M."/>
            <person name="Obermaier B."/>
            <person name="Delseny M."/>
            <person name="Boutry M."/>
            <person name="Grivell L.A."/>
            <person name="Mache R."/>
            <person name="Puigdomenech P."/>
            <person name="De Simone V."/>
            <person name="Choisne N."/>
            <person name="Artiguenave F."/>
            <person name="Robert C."/>
            <person name="Brottier P."/>
            <person name="Wincker P."/>
            <person name="Cattolico L."/>
            <person name="Weissenbach J."/>
            <person name="Saurin W."/>
            <person name="Quetier F."/>
            <person name="Schaefer M."/>
            <person name="Mueller-Auer S."/>
            <person name="Gabel C."/>
            <person name="Fuchs M."/>
            <person name="Benes V."/>
            <person name="Wurmbach E."/>
            <person name="Drzonek H."/>
            <person name="Erfle H."/>
            <person name="Jordan N."/>
            <person name="Bangert S."/>
            <person name="Wiedelmann R."/>
            <person name="Kranz H."/>
            <person name="Voss H."/>
            <person name="Holland R."/>
            <person name="Brandt P."/>
            <person name="Nyakatura G."/>
            <person name="Vezzi A."/>
            <person name="D'Angelo M."/>
            <person name="Pallavicini A."/>
            <person name="Toppo S."/>
            <person name="Simionati B."/>
            <person name="Conrad A."/>
            <person name="Hornischer K."/>
            <person name="Kauer G."/>
            <person name="Loehnert T.-H."/>
            <person name="Nordsiek G."/>
            <person name="Reichelt J."/>
            <person name="Scharfe M."/>
            <person name="Schoen O."/>
            <person name="Bargues M."/>
            <person name="Terol J."/>
            <person name="Climent J."/>
            <person name="Navarro P."/>
            <person name="Collado C."/>
            <person name="Perez-Perez A."/>
            <person name="Ottenwaelder B."/>
            <person name="Duchemin D."/>
            <person name="Cooke R."/>
            <person name="Laudie M."/>
            <person name="Berger-Llauro C."/>
            <person name="Purnelle B."/>
            <person name="Masuy D."/>
            <person name="de Haan M."/>
            <person name="Maarse A.C."/>
            <person name="Alcaraz J.-P."/>
            <person name="Cottet A."/>
            <person name="Casacuberta E."/>
            <person name="Monfort A."/>
            <person name="Argiriou A."/>
            <person name="Flores M."/>
            <person name="Liguori R."/>
            <person name="Vitale D."/>
            <person name="Mannhaupt G."/>
            <person name="Haase D."/>
            <person name="Schoof H."/>
            <person name="Rudd S."/>
            <person name="Zaccaria P."/>
            <person name="Mewes H.-W."/>
            <person name="Mayer K.F.X."/>
            <person name="Kaul S."/>
            <person name="Town C.D."/>
            <person name="Koo H.L."/>
            <person name="Tallon L.J."/>
            <person name="Jenkins J."/>
            <person name="Rooney T."/>
            <person name="Rizzo M."/>
            <person name="Walts A."/>
            <person name="Utterback T."/>
            <person name="Fujii C.Y."/>
            <person name="Shea T.P."/>
            <person name="Creasy T.H."/>
            <person name="Haas B."/>
            <person name="Maiti R."/>
            <person name="Wu D."/>
            <person name="Peterson J."/>
            <person name="Van Aken S."/>
            <person name="Pai G."/>
            <person name="Militscher J."/>
            <person name="Sellers P."/>
            <person name="Gill J.E."/>
            <person name="Feldblyum T.V."/>
            <person name="Preuss D."/>
            <person name="Lin X."/>
            <person name="Nierman W.C."/>
            <person name="Salzberg S.L."/>
            <person name="White O."/>
            <person name="Venter J.C."/>
            <person name="Fraser C.M."/>
            <person name="Kaneko T."/>
            <person name="Nakamura Y."/>
            <person name="Sato S."/>
            <person name="Kato T."/>
            <person name="Asamizu E."/>
            <person name="Sasamoto S."/>
            <person name="Kimura T."/>
            <person name="Idesawa K."/>
            <person name="Kawashima K."/>
            <person name="Kishida Y."/>
            <person name="Kiyokawa C."/>
            <person name="Kohara M."/>
            <person name="Matsumoto M."/>
            <person name="Matsuno A."/>
            <person name="Muraki A."/>
            <person name="Nakayama S."/>
            <person name="Nakazaki N."/>
            <person name="Shinpo S."/>
            <person name="Takeuchi C."/>
            <person name="Wada T."/>
            <person name="Watanabe A."/>
            <person name="Yamada M."/>
            <person name="Yasuda M."/>
            <person name="Tabata S."/>
        </authorList>
    </citation>
    <scope>NUCLEOTIDE SEQUENCE [LARGE SCALE GENOMIC DNA]</scope>
    <source>
        <strain>cv. Columbia</strain>
    </source>
</reference>
<reference key="3">
    <citation type="journal article" date="2017" name="Plant J.">
        <title>Araport11: a complete reannotation of the Arabidopsis thaliana reference genome.</title>
        <authorList>
            <person name="Cheng C.Y."/>
            <person name="Krishnakumar V."/>
            <person name="Chan A.P."/>
            <person name="Thibaud-Nissen F."/>
            <person name="Schobel S."/>
            <person name="Town C.D."/>
        </authorList>
    </citation>
    <scope>GENOME REANNOTATION</scope>
    <source>
        <strain>cv. Columbia</strain>
    </source>
</reference>
<reference key="4">
    <citation type="journal article" date="2003" name="Science">
        <title>Empirical analysis of transcriptional activity in the Arabidopsis genome.</title>
        <authorList>
            <person name="Yamada K."/>
            <person name="Lim J."/>
            <person name="Dale J.M."/>
            <person name="Chen H."/>
            <person name="Shinn P."/>
            <person name="Palm C.J."/>
            <person name="Southwick A.M."/>
            <person name="Wu H.C."/>
            <person name="Kim C.J."/>
            <person name="Nguyen M."/>
            <person name="Pham P.K."/>
            <person name="Cheuk R.F."/>
            <person name="Karlin-Newmann G."/>
            <person name="Liu S.X."/>
            <person name="Lam B."/>
            <person name="Sakano H."/>
            <person name="Wu T."/>
            <person name="Yu G."/>
            <person name="Miranda M."/>
            <person name="Quach H.L."/>
            <person name="Tripp M."/>
            <person name="Chang C.H."/>
            <person name="Lee J.M."/>
            <person name="Toriumi M.J."/>
            <person name="Chan M.M."/>
            <person name="Tang C.C."/>
            <person name="Onodera C.S."/>
            <person name="Deng J.M."/>
            <person name="Akiyama K."/>
            <person name="Ansari Y."/>
            <person name="Arakawa T."/>
            <person name="Banh J."/>
            <person name="Banno F."/>
            <person name="Bowser L."/>
            <person name="Brooks S.Y."/>
            <person name="Carninci P."/>
            <person name="Chao Q."/>
            <person name="Choy N."/>
            <person name="Enju A."/>
            <person name="Goldsmith A.D."/>
            <person name="Gurjal M."/>
            <person name="Hansen N.F."/>
            <person name="Hayashizaki Y."/>
            <person name="Johnson-Hopson C."/>
            <person name="Hsuan V.W."/>
            <person name="Iida K."/>
            <person name="Karnes M."/>
            <person name="Khan S."/>
            <person name="Koesema E."/>
            <person name="Ishida J."/>
            <person name="Jiang P.X."/>
            <person name="Jones T."/>
            <person name="Kawai J."/>
            <person name="Kamiya A."/>
            <person name="Meyers C."/>
            <person name="Nakajima M."/>
            <person name="Narusaka M."/>
            <person name="Seki M."/>
            <person name="Sakurai T."/>
            <person name="Satou M."/>
            <person name="Tamse R."/>
            <person name="Vaysberg M."/>
            <person name="Wallender E.K."/>
            <person name="Wong C."/>
            <person name="Yamamura Y."/>
            <person name="Yuan S."/>
            <person name="Shinozaki K."/>
            <person name="Davis R.W."/>
            <person name="Theologis A."/>
            <person name="Ecker J.R."/>
        </authorList>
    </citation>
    <scope>NUCLEOTIDE SEQUENCE [LARGE SCALE MRNA]</scope>
    <source>
        <strain>cv. Columbia</strain>
    </source>
</reference>
<gene>
    <name evidence="4" type="ordered locus">At3g46100</name>
    <name evidence="5" type="ORF">F12M12_70</name>
</gene>
<keyword id="KW-0030">Aminoacyl-tRNA synthetase</keyword>
<keyword id="KW-0067">ATP-binding</keyword>
<keyword id="KW-0150">Chloroplast</keyword>
<keyword id="KW-0436">Ligase</keyword>
<keyword id="KW-0496">Mitochondrion</keyword>
<keyword id="KW-0547">Nucleotide-binding</keyword>
<keyword id="KW-0934">Plastid</keyword>
<keyword id="KW-0648">Protein biosynthesis</keyword>
<keyword id="KW-1185">Reference proteome</keyword>
<keyword id="KW-0809">Transit peptide</keyword>
<proteinExistence type="evidence at transcript level"/>
<sequence length="486" mass="54559">MRAIHIVTTRLSSSFRPILLLDLVSSCSPPRQFSIPRRLICAAANGGGRSGSIVAPLVTEEDFHKKIDVNPPKGTRDFPPEDMRLRNWLFNHFKEVSRLYGYEEVDYPVLETEALFIRKAGEEIRDQLYCFEDRGNRRVALRPELTPSLARLVIQKGKSVSLPLKWFAIGQCWRYERMTRGRRREHYQWNMDIIGVPQVTAEAELISSIVTFFKRIGITASDVGFKVSSRKVLQELLKKYGVPEDLFGRVCIIIDKIEKIPIDEIKKELGFTGISEDAIEQLLQVLSVKSLDDLEDIIGGAGEAIADLKQLFSLAEKFGYSEWIQFDASVVRGLAYYTGIVFEGFDRKGKLRAICGGGRYDRLLSTYGGDDFPACGFGFGDAVIVELLKEKDLLPELGQEVENIVCALDKDLQGAAATVATALRDKGQTVDLVLESKPLKWVFKRAARVNARRLVLVGKTEWEDGSVSVKVLSSGEQFQVKLSDLE</sequence>
<protein>
    <recommendedName>
        <fullName evidence="3">Histidine--tRNA ligase, chloroplastic/mitochondrial</fullName>
        <ecNumber evidence="3">6.1.1.21</ecNumber>
    </recommendedName>
    <alternativeName>
        <fullName evidence="3">Histidyl-tRNA synthetase</fullName>
        <shortName evidence="3">HisRS</shortName>
    </alternativeName>
    <alternativeName>
        <fullName evidence="2">Histidyl-tRNA synthetase 1</fullName>
        <shortName evidence="2">AtHRS1</shortName>
    </alternativeName>
</protein>
<organism>
    <name type="scientific">Arabidopsis thaliana</name>
    <name type="common">Mouse-ear cress</name>
    <dbReference type="NCBI Taxonomy" id="3702"/>
    <lineage>
        <taxon>Eukaryota</taxon>
        <taxon>Viridiplantae</taxon>
        <taxon>Streptophyta</taxon>
        <taxon>Embryophyta</taxon>
        <taxon>Tracheophyta</taxon>
        <taxon>Spermatophyta</taxon>
        <taxon>Magnoliopsida</taxon>
        <taxon>eudicotyledons</taxon>
        <taxon>Gunneridae</taxon>
        <taxon>Pentapetalae</taxon>
        <taxon>rosids</taxon>
        <taxon>malvids</taxon>
        <taxon>Brassicales</taxon>
        <taxon>Brassicaceae</taxon>
        <taxon>Camelineae</taxon>
        <taxon>Arabidopsis</taxon>
    </lineage>
</organism>
<feature type="transit peptide" description="Chloroplast and mitochondrion" evidence="3">
    <location>
        <begin position="1"/>
        <end status="unknown"/>
    </location>
</feature>
<feature type="chain" id="PRO_0000433546" description="Histidine--tRNA ligase, chloroplastic/mitochondrial" evidence="3">
    <location>
        <begin status="unknown"/>
        <end position="486"/>
    </location>
</feature>
<name>SYHM_ARATH</name>
<accession>O82413</accession>
<evidence type="ECO:0000269" key="1">
    <source>
    </source>
</evidence>
<evidence type="ECO:0000303" key="2">
    <source>
    </source>
</evidence>
<evidence type="ECO:0000305" key="3"/>
<evidence type="ECO:0000312" key="4">
    <source>
        <dbReference type="Araport" id="AT3G46100"/>
    </source>
</evidence>
<evidence type="ECO:0000312" key="5">
    <source>
        <dbReference type="EMBL" id="CAB90937.1"/>
    </source>
</evidence>
<comment type="catalytic activity">
    <reaction evidence="3">
        <text>tRNA(His) + L-histidine + ATP = L-histidyl-tRNA(His) + AMP + diphosphate + H(+)</text>
        <dbReference type="Rhea" id="RHEA:17313"/>
        <dbReference type="Rhea" id="RHEA-COMP:9665"/>
        <dbReference type="Rhea" id="RHEA-COMP:9689"/>
        <dbReference type="ChEBI" id="CHEBI:15378"/>
        <dbReference type="ChEBI" id="CHEBI:30616"/>
        <dbReference type="ChEBI" id="CHEBI:33019"/>
        <dbReference type="ChEBI" id="CHEBI:57595"/>
        <dbReference type="ChEBI" id="CHEBI:78442"/>
        <dbReference type="ChEBI" id="CHEBI:78527"/>
        <dbReference type="ChEBI" id="CHEBI:456215"/>
        <dbReference type="EC" id="6.1.1.21"/>
    </reaction>
</comment>
<comment type="subcellular location">
    <subcellularLocation>
        <location evidence="1">Plastid</location>
        <location evidence="1">Chloroplast</location>
    </subcellularLocation>
    <subcellularLocation>
        <location evidence="1">Mitochondrion</location>
    </subcellularLocation>
</comment>
<comment type="similarity">
    <text evidence="3">Belongs to the class-II aminoacyl-tRNA synthetase family.</text>
</comment>